<feature type="chain" id="PRO_1000115148" description="Large ribosomal subunit protein bL33">
    <location>
        <begin position="1"/>
        <end position="55"/>
    </location>
</feature>
<gene>
    <name evidence="1" type="primary">rpmG</name>
    <name type="ordered locus">Bpro_3803</name>
</gene>
<organism>
    <name type="scientific">Polaromonas sp. (strain JS666 / ATCC BAA-500)</name>
    <dbReference type="NCBI Taxonomy" id="296591"/>
    <lineage>
        <taxon>Bacteria</taxon>
        <taxon>Pseudomonadati</taxon>
        <taxon>Pseudomonadota</taxon>
        <taxon>Betaproteobacteria</taxon>
        <taxon>Burkholderiales</taxon>
        <taxon>Comamonadaceae</taxon>
        <taxon>Polaromonas</taxon>
    </lineage>
</organism>
<sequence>MAKGAREKIKLESTAGTGHFYTTTKNKKTTPDKMLIMKFDPKARKHVEYKEIKLK</sequence>
<comment type="similarity">
    <text evidence="1">Belongs to the bacterial ribosomal protein bL33 family.</text>
</comment>
<accession>Q125U1</accession>
<keyword id="KW-1185">Reference proteome</keyword>
<keyword id="KW-0687">Ribonucleoprotein</keyword>
<keyword id="KW-0689">Ribosomal protein</keyword>
<protein>
    <recommendedName>
        <fullName evidence="1">Large ribosomal subunit protein bL33</fullName>
    </recommendedName>
    <alternativeName>
        <fullName evidence="2">50S ribosomal protein L33</fullName>
    </alternativeName>
</protein>
<reference key="1">
    <citation type="journal article" date="2008" name="Appl. Environ. Microbiol.">
        <title>The genome of Polaromonas sp. strain JS666: insights into the evolution of a hydrocarbon- and xenobiotic-degrading bacterium, and features of relevance to biotechnology.</title>
        <authorList>
            <person name="Mattes T.E."/>
            <person name="Alexander A.K."/>
            <person name="Richardson P.M."/>
            <person name="Munk A.C."/>
            <person name="Han C.S."/>
            <person name="Stothard P."/>
            <person name="Coleman N.V."/>
        </authorList>
    </citation>
    <scope>NUCLEOTIDE SEQUENCE [LARGE SCALE GENOMIC DNA]</scope>
    <source>
        <strain>JS666 / ATCC BAA-500</strain>
    </source>
</reference>
<name>RL33_POLSJ</name>
<proteinExistence type="inferred from homology"/>
<dbReference type="EMBL" id="CP000316">
    <property type="protein sequence ID" value="ABE45701.1"/>
    <property type="molecule type" value="Genomic_DNA"/>
</dbReference>
<dbReference type="RefSeq" id="WP_007863188.1">
    <property type="nucleotide sequence ID" value="NZ_FNHX01000005.1"/>
</dbReference>
<dbReference type="SMR" id="Q125U1"/>
<dbReference type="STRING" id="296591.Bpro_3803"/>
<dbReference type="KEGG" id="pol:Bpro_3803"/>
<dbReference type="eggNOG" id="COG0267">
    <property type="taxonomic scope" value="Bacteria"/>
</dbReference>
<dbReference type="HOGENOM" id="CLU_190949_1_1_4"/>
<dbReference type="Proteomes" id="UP000001983">
    <property type="component" value="Chromosome"/>
</dbReference>
<dbReference type="GO" id="GO:0022625">
    <property type="term" value="C:cytosolic large ribosomal subunit"/>
    <property type="evidence" value="ECO:0007669"/>
    <property type="project" value="TreeGrafter"/>
</dbReference>
<dbReference type="GO" id="GO:0003735">
    <property type="term" value="F:structural constituent of ribosome"/>
    <property type="evidence" value="ECO:0007669"/>
    <property type="project" value="InterPro"/>
</dbReference>
<dbReference type="GO" id="GO:0006412">
    <property type="term" value="P:translation"/>
    <property type="evidence" value="ECO:0007669"/>
    <property type="project" value="UniProtKB-UniRule"/>
</dbReference>
<dbReference type="Gene3D" id="2.20.28.120">
    <property type="entry name" value="Ribosomal protein L33"/>
    <property type="match status" value="1"/>
</dbReference>
<dbReference type="HAMAP" id="MF_00294">
    <property type="entry name" value="Ribosomal_bL33"/>
    <property type="match status" value="1"/>
</dbReference>
<dbReference type="InterPro" id="IPR001705">
    <property type="entry name" value="Ribosomal_bL33"/>
</dbReference>
<dbReference type="InterPro" id="IPR038584">
    <property type="entry name" value="Ribosomal_bL33_sf"/>
</dbReference>
<dbReference type="InterPro" id="IPR011332">
    <property type="entry name" value="Ribosomal_zn-bd"/>
</dbReference>
<dbReference type="NCBIfam" id="NF001860">
    <property type="entry name" value="PRK00595.1"/>
    <property type="match status" value="1"/>
</dbReference>
<dbReference type="NCBIfam" id="TIGR01023">
    <property type="entry name" value="rpmG_bact"/>
    <property type="match status" value="1"/>
</dbReference>
<dbReference type="PANTHER" id="PTHR15238">
    <property type="entry name" value="54S RIBOSOMAL PROTEIN L39, MITOCHONDRIAL"/>
    <property type="match status" value="1"/>
</dbReference>
<dbReference type="PANTHER" id="PTHR15238:SF1">
    <property type="entry name" value="LARGE RIBOSOMAL SUBUNIT PROTEIN BL33M"/>
    <property type="match status" value="1"/>
</dbReference>
<dbReference type="Pfam" id="PF00471">
    <property type="entry name" value="Ribosomal_L33"/>
    <property type="match status" value="1"/>
</dbReference>
<dbReference type="SUPFAM" id="SSF57829">
    <property type="entry name" value="Zn-binding ribosomal proteins"/>
    <property type="match status" value="1"/>
</dbReference>
<evidence type="ECO:0000255" key="1">
    <source>
        <dbReference type="HAMAP-Rule" id="MF_00294"/>
    </source>
</evidence>
<evidence type="ECO:0000305" key="2"/>